<sequence length="926" mass="104203">MNRRDFIKSAAASAACASAGIAIPANLSAASEAEKGWRWDKAACRFCGTGCGIMVATKEGKIVAVKGDPEAPVNRGLNCIKGYFNAKIMYGEDRITHPLLRVNEKGEFDKKGKFKQVSWKQAFDVMEAQFRKTYDELGPHGVGVLGSGQYTIPEGYTAAKMMKAGFRSNSIDPNARHCMASAVVGFIQVFGIDEPSGCFDDIELTDTIVAWGANMAEMHPILWARVSDRKLSNPDRVKVVNLSTYSTRTSNLADIEIIFAPSADLAIWNYIAREIVYNHPEMIDEEFVKKHCIFTTGPADIGYGLRPDIKYKKYLSSELDTAATEKSKVLSEAEGVTLSYLGLKAGDTMENKNTATAGNHWHISFEEFKKALAPYTLEFTAKVAKGDPNEDIEEFKGKLKALADLYIEKNRKVVSFWTMGFNQHQRGTWVNEQAYMVHFLLGKQALPGSGAFSLTGQPSACGTAREVGTFVHRLPADMVVNNPKHREISEKIWKLPAGTLNGIPGSHYVKMMRDLEDGKVKFIWVQVNNPWQNTANANHWIKAAREMDNFIVVSDPYPGISAKVADLILPTAMIYEKWGAYGNAERRTQHWRQQVLPVGEAMPDIWQMLEFSKRFKLKDVWGEKKLNDKVTLPSVLDAAKAMGYSEEDTLFDVLFANEEAKSYPANDPIMENFDNTEVFGDKRGVIGSDGKEFKGYGFFVHKYLWEEYRKFGLGHGHDLADFDTYHRVRGLRWPVVDGKETQWRFNTKFDPYAKKAAPNDKFAFYGNKAAALPSGDLKGVTDKEKTPLTNKAKIFFRPYMDPCEMPSSEYPFWLCTGRVLEHWHSGTMTMRVPELYRAVPEALCYMHEQDAAKLGVLQNEIVWIESRRGKVKARVDLKGRNKPPVGLVYVPWFDENVFINKVTLDSTCPISKETDYKKCAVKIYKA</sequence>
<evidence type="ECO:0000255" key="1">
    <source>
        <dbReference type="HAMAP-Rule" id="MF_01630"/>
    </source>
</evidence>
<comment type="function">
    <text evidence="1">Catalytic subunit of the periplasmic nitrate reductase complex NapAB. Receives electrons from NapB and catalyzes the reduction of nitrate to nitrite.</text>
</comment>
<comment type="catalytic activity">
    <reaction evidence="1">
        <text>2 Fe(II)-[cytochrome] + nitrate + 2 H(+) = 2 Fe(III)-[cytochrome] + nitrite + H2O</text>
        <dbReference type="Rhea" id="RHEA:12909"/>
        <dbReference type="Rhea" id="RHEA-COMP:11777"/>
        <dbReference type="Rhea" id="RHEA-COMP:11778"/>
        <dbReference type="ChEBI" id="CHEBI:15377"/>
        <dbReference type="ChEBI" id="CHEBI:15378"/>
        <dbReference type="ChEBI" id="CHEBI:16301"/>
        <dbReference type="ChEBI" id="CHEBI:17632"/>
        <dbReference type="ChEBI" id="CHEBI:29033"/>
        <dbReference type="ChEBI" id="CHEBI:29034"/>
        <dbReference type="EC" id="1.9.6.1"/>
    </reaction>
</comment>
<comment type="cofactor">
    <cofactor evidence="1">
        <name>[4Fe-4S] cluster</name>
        <dbReference type="ChEBI" id="CHEBI:49883"/>
    </cofactor>
    <text evidence="1">Binds 1 [4Fe-4S] cluster.</text>
</comment>
<comment type="cofactor">
    <cofactor evidence="1">
        <name>Mo-bis(molybdopterin guanine dinucleotide)</name>
        <dbReference type="ChEBI" id="CHEBI:60539"/>
    </cofactor>
    <text evidence="1">Binds 1 molybdenum-bis(molybdopterin guanine dinucleotide) (Mo-bis-MGD) cofactor per subunit.</text>
</comment>
<comment type="subunit">
    <text evidence="1">Component of the periplasmic nitrate reductase NapAB complex composed of NapA and NapB.</text>
</comment>
<comment type="subcellular location">
    <subcellularLocation>
        <location evidence="1">Periplasm</location>
    </subcellularLocation>
</comment>
<comment type="PTM">
    <text evidence="1">Predicted to be exported by the Tat system. The position of the signal peptide cleavage has not been experimentally proven.</text>
</comment>
<comment type="similarity">
    <text evidence="1">Belongs to the prokaryotic molybdopterin-containing oxidoreductase family. NasA/NapA/NarB subfamily.</text>
</comment>
<accession>A7GZP5</accession>
<dbReference type="EC" id="1.9.6.1" evidence="1"/>
<dbReference type="EMBL" id="CP000767">
    <property type="protein sequence ID" value="EAT99733.1"/>
    <property type="molecule type" value="Genomic_DNA"/>
</dbReference>
<dbReference type="RefSeq" id="WP_011992551.1">
    <property type="nucleotide sequence ID" value="NC_009715.2"/>
</dbReference>
<dbReference type="SMR" id="A7GZP5"/>
<dbReference type="STRING" id="360105.CCV52592_1928"/>
<dbReference type="KEGG" id="ccv:CCV52592_1928"/>
<dbReference type="HOGENOM" id="CLU_000422_13_4_7"/>
<dbReference type="OrthoDB" id="7376058at2"/>
<dbReference type="Proteomes" id="UP000006380">
    <property type="component" value="Chromosome"/>
</dbReference>
<dbReference type="GO" id="GO:0016020">
    <property type="term" value="C:membrane"/>
    <property type="evidence" value="ECO:0007669"/>
    <property type="project" value="TreeGrafter"/>
</dbReference>
<dbReference type="GO" id="GO:0009325">
    <property type="term" value="C:nitrate reductase complex"/>
    <property type="evidence" value="ECO:0007669"/>
    <property type="project" value="TreeGrafter"/>
</dbReference>
<dbReference type="GO" id="GO:0042597">
    <property type="term" value="C:periplasmic space"/>
    <property type="evidence" value="ECO:0007669"/>
    <property type="project" value="UniProtKB-SubCell"/>
</dbReference>
<dbReference type="GO" id="GO:0051539">
    <property type="term" value="F:4 iron, 4 sulfur cluster binding"/>
    <property type="evidence" value="ECO:0007669"/>
    <property type="project" value="UniProtKB-KW"/>
</dbReference>
<dbReference type="GO" id="GO:0009055">
    <property type="term" value="F:electron transfer activity"/>
    <property type="evidence" value="ECO:0007669"/>
    <property type="project" value="UniProtKB-UniRule"/>
</dbReference>
<dbReference type="GO" id="GO:0005506">
    <property type="term" value="F:iron ion binding"/>
    <property type="evidence" value="ECO:0007669"/>
    <property type="project" value="UniProtKB-UniRule"/>
</dbReference>
<dbReference type="GO" id="GO:0030151">
    <property type="term" value="F:molybdenum ion binding"/>
    <property type="evidence" value="ECO:0007669"/>
    <property type="project" value="InterPro"/>
</dbReference>
<dbReference type="GO" id="GO:0043546">
    <property type="term" value="F:molybdopterin cofactor binding"/>
    <property type="evidence" value="ECO:0007669"/>
    <property type="project" value="InterPro"/>
</dbReference>
<dbReference type="GO" id="GO:0050140">
    <property type="term" value="F:nitrate reductase (cytochrome) activity"/>
    <property type="evidence" value="ECO:0007669"/>
    <property type="project" value="UniProtKB-EC"/>
</dbReference>
<dbReference type="GO" id="GO:0006777">
    <property type="term" value="P:Mo-molybdopterin cofactor biosynthetic process"/>
    <property type="evidence" value="ECO:0007669"/>
    <property type="project" value="UniProtKB-UniRule"/>
</dbReference>
<dbReference type="GO" id="GO:0042128">
    <property type="term" value="P:nitrate assimilation"/>
    <property type="evidence" value="ECO:0007669"/>
    <property type="project" value="UniProtKB-UniRule"/>
</dbReference>
<dbReference type="CDD" id="cd02791">
    <property type="entry name" value="MopB_CT_Nitrate-R-NapA-like"/>
    <property type="match status" value="1"/>
</dbReference>
<dbReference type="FunFam" id="2.40.40.20:FF:000005">
    <property type="entry name" value="Periplasmic nitrate reductase"/>
    <property type="match status" value="1"/>
</dbReference>
<dbReference type="Gene3D" id="2.40.40.20">
    <property type="match status" value="1"/>
</dbReference>
<dbReference type="Gene3D" id="3.30.200.210">
    <property type="match status" value="1"/>
</dbReference>
<dbReference type="Gene3D" id="3.40.50.740">
    <property type="match status" value="3"/>
</dbReference>
<dbReference type="Gene3D" id="2.20.25.90">
    <property type="entry name" value="ADC-like domains"/>
    <property type="match status" value="1"/>
</dbReference>
<dbReference type="Gene3D" id="3.40.228.10">
    <property type="entry name" value="Dimethylsulfoxide Reductase, domain 2"/>
    <property type="match status" value="1"/>
</dbReference>
<dbReference type="HAMAP" id="MF_01630">
    <property type="entry name" value="Nitrate_reduct_NapA"/>
    <property type="match status" value="1"/>
</dbReference>
<dbReference type="InterPro" id="IPR009010">
    <property type="entry name" value="Asp_de-COase-like_dom_sf"/>
</dbReference>
<dbReference type="InterPro" id="IPR041957">
    <property type="entry name" value="CT_Nitrate-R-NapA-like"/>
</dbReference>
<dbReference type="InterPro" id="IPR006657">
    <property type="entry name" value="MoPterin_dinucl-bd_dom"/>
</dbReference>
<dbReference type="InterPro" id="IPR006656">
    <property type="entry name" value="Mopterin_OxRdtase"/>
</dbReference>
<dbReference type="InterPro" id="IPR006963">
    <property type="entry name" value="Mopterin_OxRdtase_4Fe-4S_dom"/>
</dbReference>
<dbReference type="InterPro" id="IPR027467">
    <property type="entry name" value="MopterinOxRdtase_cofactor_BS"/>
</dbReference>
<dbReference type="InterPro" id="IPR010051">
    <property type="entry name" value="Periplasm_NO3_reductase_lsu"/>
</dbReference>
<dbReference type="InterPro" id="IPR050123">
    <property type="entry name" value="Prok_molybdopt-oxidoreductase"/>
</dbReference>
<dbReference type="InterPro" id="IPR006311">
    <property type="entry name" value="TAT_signal"/>
</dbReference>
<dbReference type="NCBIfam" id="TIGR01706">
    <property type="entry name" value="NAPA"/>
    <property type="match status" value="1"/>
</dbReference>
<dbReference type="NCBIfam" id="NF010055">
    <property type="entry name" value="PRK13532.1"/>
    <property type="match status" value="1"/>
</dbReference>
<dbReference type="PANTHER" id="PTHR43105:SF11">
    <property type="entry name" value="PERIPLASMIC NITRATE REDUCTASE"/>
    <property type="match status" value="1"/>
</dbReference>
<dbReference type="PANTHER" id="PTHR43105">
    <property type="entry name" value="RESPIRATORY NITRATE REDUCTASE"/>
    <property type="match status" value="1"/>
</dbReference>
<dbReference type="Pfam" id="PF04879">
    <property type="entry name" value="Molybdop_Fe4S4"/>
    <property type="match status" value="1"/>
</dbReference>
<dbReference type="Pfam" id="PF00384">
    <property type="entry name" value="Molybdopterin"/>
    <property type="match status" value="1"/>
</dbReference>
<dbReference type="Pfam" id="PF01568">
    <property type="entry name" value="Molydop_binding"/>
    <property type="match status" value="1"/>
</dbReference>
<dbReference type="SMART" id="SM00926">
    <property type="entry name" value="Molybdop_Fe4S4"/>
    <property type="match status" value="1"/>
</dbReference>
<dbReference type="SUPFAM" id="SSF50692">
    <property type="entry name" value="ADC-like"/>
    <property type="match status" value="1"/>
</dbReference>
<dbReference type="SUPFAM" id="SSF53706">
    <property type="entry name" value="Formate dehydrogenase/DMSO reductase, domains 1-3"/>
    <property type="match status" value="1"/>
</dbReference>
<dbReference type="PROSITE" id="PS51669">
    <property type="entry name" value="4FE4S_MOW_BIS_MGD"/>
    <property type="match status" value="1"/>
</dbReference>
<dbReference type="PROSITE" id="PS00551">
    <property type="entry name" value="MOLYBDOPTERIN_PROK_1"/>
    <property type="match status" value="1"/>
</dbReference>
<dbReference type="PROSITE" id="PS51318">
    <property type="entry name" value="TAT"/>
    <property type="match status" value="1"/>
</dbReference>
<reference key="1">
    <citation type="submission" date="2007-07" db="EMBL/GenBank/DDBJ databases">
        <title>Genome sequence of Campylobacter curvus 525.92 isolated from human feces.</title>
        <authorList>
            <person name="Fouts D.E."/>
            <person name="Mongodin E.F."/>
            <person name="Puiu D."/>
            <person name="Sebastian Y."/>
            <person name="Miller W.G."/>
            <person name="Mandrell R.E."/>
            <person name="Lastovica A.J."/>
            <person name="Nelson K.E."/>
        </authorList>
    </citation>
    <scope>NUCLEOTIDE SEQUENCE [LARGE SCALE GENOMIC DNA]</scope>
    <source>
        <strain>525.92</strain>
    </source>
</reference>
<proteinExistence type="inferred from homology"/>
<gene>
    <name evidence="1" type="primary">napA</name>
    <name type="ordered locus">Ccur92_13830</name>
    <name type="ORF">CCV52592_1928</name>
</gene>
<organism>
    <name type="scientific">Campylobacter curvus (strain 525.92)</name>
    <dbReference type="NCBI Taxonomy" id="360105"/>
    <lineage>
        <taxon>Bacteria</taxon>
        <taxon>Pseudomonadati</taxon>
        <taxon>Campylobacterota</taxon>
        <taxon>Epsilonproteobacteria</taxon>
        <taxon>Campylobacterales</taxon>
        <taxon>Campylobacteraceae</taxon>
        <taxon>Campylobacter</taxon>
    </lineage>
</organism>
<feature type="signal peptide" description="Tat-type signal" evidence="1">
    <location>
        <begin position="1"/>
        <end position="30"/>
    </location>
</feature>
<feature type="chain" id="PRO_1000069711" description="Periplasmic nitrate reductase" evidence="1">
    <location>
        <begin position="31"/>
        <end position="926"/>
    </location>
</feature>
<feature type="domain" description="4Fe-4S Mo/W bis-MGD-type" evidence="1">
    <location>
        <begin position="37"/>
        <end position="93"/>
    </location>
</feature>
<feature type="binding site" evidence="1">
    <location>
        <position position="44"/>
    </location>
    <ligand>
        <name>[4Fe-4S] cluster</name>
        <dbReference type="ChEBI" id="CHEBI:49883"/>
    </ligand>
</feature>
<feature type="binding site" evidence="1">
    <location>
        <position position="47"/>
    </location>
    <ligand>
        <name>[4Fe-4S] cluster</name>
        <dbReference type="ChEBI" id="CHEBI:49883"/>
    </ligand>
</feature>
<feature type="binding site" evidence="1">
    <location>
        <position position="51"/>
    </location>
    <ligand>
        <name>[4Fe-4S] cluster</name>
        <dbReference type="ChEBI" id="CHEBI:49883"/>
    </ligand>
</feature>
<feature type="binding site" evidence="1">
    <location>
        <position position="79"/>
    </location>
    <ligand>
        <name>[4Fe-4S] cluster</name>
        <dbReference type="ChEBI" id="CHEBI:49883"/>
    </ligand>
</feature>
<feature type="binding site" evidence="1">
    <location>
        <position position="81"/>
    </location>
    <ligand>
        <name>Mo-bis(molybdopterin guanine dinucleotide)</name>
        <dbReference type="ChEBI" id="CHEBI:60539"/>
    </ligand>
</feature>
<feature type="binding site" evidence="1">
    <location>
        <position position="149"/>
    </location>
    <ligand>
        <name>Mo-bis(molybdopterin guanine dinucleotide)</name>
        <dbReference type="ChEBI" id="CHEBI:60539"/>
    </ligand>
</feature>
<feature type="binding site" evidence="1">
    <location>
        <position position="174"/>
    </location>
    <ligand>
        <name>Mo-bis(molybdopterin guanine dinucleotide)</name>
        <dbReference type="ChEBI" id="CHEBI:60539"/>
    </ligand>
</feature>
<feature type="binding site" evidence="1">
    <location>
        <position position="178"/>
    </location>
    <ligand>
        <name>Mo-bis(molybdopterin guanine dinucleotide)</name>
        <dbReference type="ChEBI" id="CHEBI:60539"/>
    </ligand>
</feature>
<feature type="binding site" evidence="1">
    <location>
        <begin position="211"/>
        <end position="218"/>
    </location>
    <ligand>
        <name>Mo-bis(molybdopterin guanine dinucleotide)</name>
        <dbReference type="ChEBI" id="CHEBI:60539"/>
    </ligand>
</feature>
<feature type="binding site" evidence="1">
    <location>
        <position position="419"/>
    </location>
    <ligand>
        <name>Mo-bis(molybdopterin guanine dinucleotide)</name>
        <dbReference type="ChEBI" id="CHEBI:60539"/>
    </ligand>
</feature>
<feature type="binding site" evidence="1">
    <location>
        <position position="423"/>
    </location>
    <ligand>
        <name>Mo-bis(molybdopterin guanine dinucleotide)</name>
        <dbReference type="ChEBI" id="CHEBI:60539"/>
    </ligand>
</feature>
<feature type="binding site" evidence="1">
    <location>
        <position position="529"/>
    </location>
    <ligand>
        <name>Mo-bis(molybdopterin guanine dinucleotide)</name>
        <dbReference type="ChEBI" id="CHEBI:60539"/>
    </ligand>
</feature>
<feature type="binding site" evidence="1">
    <location>
        <begin position="554"/>
        <end position="555"/>
    </location>
    <ligand>
        <name>Mo-bis(molybdopterin guanine dinucleotide)</name>
        <dbReference type="ChEBI" id="CHEBI:60539"/>
    </ligand>
</feature>
<feature type="binding site" evidence="1">
    <location>
        <position position="577"/>
    </location>
    <ligand>
        <name>Mo-bis(molybdopterin guanine dinucleotide)</name>
        <dbReference type="ChEBI" id="CHEBI:60539"/>
    </ligand>
</feature>
<feature type="binding site" evidence="1">
    <location>
        <position position="604"/>
    </location>
    <ligand>
        <name>Mo-bis(molybdopterin guanine dinucleotide)</name>
        <dbReference type="ChEBI" id="CHEBI:60539"/>
    </ligand>
</feature>
<feature type="binding site" evidence="1">
    <location>
        <begin position="816"/>
        <end position="825"/>
    </location>
    <ligand>
        <name>Mo-bis(molybdopterin guanine dinucleotide)</name>
        <dbReference type="ChEBI" id="CHEBI:60539"/>
    </ligand>
</feature>
<feature type="binding site" evidence="1">
    <location>
        <position position="892"/>
    </location>
    <ligand>
        <name>substrate</name>
    </ligand>
</feature>
<feature type="binding site" evidence="1">
    <location>
        <position position="900"/>
    </location>
    <ligand>
        <name>Mo-bis(molybdopterin guanine dinucleotide)</name>
        <dbReference type="ChEBI" id="CHEBI:60539"/>
    </ligand>
</feature>
<feature type="binding site" evidence="1">
    <location>
        <position position="917"/>
    </location>
    <ligand>
        <name>Mo-bis(molybdopterin guanine dinucleotide)</name>
        <dbReference type="ChEBI" id="CHEBI:60539"/>
    </ligand>
</feature>
<name>NAPA_CAMC5</name>
<protein>
    <recommendedName>
        <fullName evidence="1">Periplasmic nitrate reductase</fullName>
        <ecNumber evidence="1">1.9.6.1</ecNumber>
    </recommendedName>
</protein>
<keyword id="KW-0004">4Fe-4S</keyword>
<keyword id="KW-0249">Electron transport</keyword>
<keyword id="KW-0408">Iron</keyword>
<keyword id="KW-0411">Iron-sulfur</keyword>
<keyword id="KW-0479">Metal-binding</keyword>
<keyword id="KW-0500">Molybdenum</keyword>
<keyword id="KW-0534">Nitrate assimilation</keyword>
<keyword id="KW-0560">Oxidoreductase</keyword>
<keyword id="KW-0574">Periplasm</keyword>
<keyword id="KW-1185">Reference proteome</keyword>
<keyword id="KW-0732">Signal</keyword>
<keyword id="KW-0813">Transport</keyword>